<evidence type="ECO:0000250" key="1"/>
<evidence type="ECO:0000250" key="2">
    <source>
        <dbReference type="UniProtKB" id="P0DKR6"/>
    </source>
</evidence>
<evidence type="ECO:0000250" key="3">
    <source>
        <dbReference type="UniProtKB" id="P83302"/>
    </source>
</evidence>
<evidence type="ECO:0000305" key="4"/>
<evidence type="ECO:0000312" key="5">
    <source>
        <dbReference type="EMBL" id="ABB83627.1"/>
    </source>
</evidence>
<protein>
    <recommendedName>
        <fullName evidence="5">Short neurotoxin SNTX6</fullName>
    </recommendedName>
    <alternativeName>
        <fullName>Three-finger toxin</fullName>
        <shortName>3FTx</shortName>
    </alternativeName>
</protein>
<accession>Q2VBP2</accession>
<name>3SX6_OPHHA</name>
<comment type="function">
    <text evidence="3">This three-finger toxin binds and inhibits the nicotinic acetylcholine receptor (nAChR).</text>
</comment>
<comment type="subcellular location">
    <subcellularLocation>
        <location evidence="1">Secreted</location>
    </subcellularLocation>
</comment>
<comment type="tissue specificity">
    <text evidence="4">Expressed by the venom gland.</text>
</comment>
<comment type="miscellaneous">
    <text evidence="4">Is classified as a P-type cytotoxin, since a proline residue stands at position 49 (Pro-31 in standard classification).</text>
</comment>
<comment type="similarity">
    <text evidence="4">Belongs to the three-finger toxin family. Short-chain subfamily.</text>
</comment>
<sequence length="78" mass="8849">MKTLLLTFLVVTIVCLDLGYTLICHQLHGLQTCEPAQKFCQKRTTMFSPNHPVLLMGCTYNCPTERYSVCCSTDKCNK</sequence>
<feature type="signal peptide" evidence="1">
    <location>
        <begin position="1"/>
        <end position="21"/>
    </location>
</feature>
<feature type="chain" id="PRO_5000006483" description="Short neurotoxin SNTX6">
    <location>
        <begin position="22"/>
        <end position="78"/>
    </location>
</feature>
<feature type="site" description="Important residue for inhibition of muscle alpha-1-beta-1-delta-epsilon (CHRNA1-CHRNB1-CHRND-CHRNE) and neuronal alpha-3-beta-2/CHRNA3-CHRNB2 nAChR" evidence="3">
    <location>
        <position position="28"/>
    </location>
</feature>
<feature type="site" description="Important residue for inhibition of muscle alpha-1-beta-1-delta-epsilon (CHRNA1-CHRNB1-CHRND-CHRNE) and neuronal alpha-3-beta-2/CHRNA3-CHRNB2 nAChR" evidence="3">
    <location>
        <position position="43"/>
    </location>
</feature>
<feature type="site" description="Key residue for inhibition of muscle alpha-1-beta-1-delta-epsilon (CHRNA1-CHRNB1-CHRND-CHRNE) nAChR" evidence="3">
    <location>
        <position position="44"/>
    </location>
</feature>
<feature type="site" description="Important residue for inhibition of muscle alpha-1-beta-1-delta-epsilon (CHRNA1-CHRNB1-CHRND-CHRNE) nAChR" evidence="3">
    <location>
        <position position="45"/>
    </location>
</feature>
<feature type="site" description="Key residue for inhibition of muscle alpha-1-beta-1-delta-epsilon (CHRNA1-CHRNB1-CHRND-CHRNE) and important for inhibition of neuronal alpha-3-beta-2/CHRNA3-CHRNB2 nAChR" evidence="3">
    <location>
        <position position="46"/>
    </location>
</feature>
<feature type="site" description="Important residue for inhibition of muscle alpha-1-beta-1-delta-epsilon (CHRNA1-CHRNB1-CHRND-CHRNE) nAChR" evidence="3">
    <location>
        <position position="47"/>
    </location>
</feature>
<feature type="site" description="Important residue for inhibition of muscle alpha-1-beta-1-delta-epsilon (CHRNA1-CHRNB1-CHRND-CHRNE) and neuronal alpha-3-beta-2/CHRNA3-CHRNB2 nAChR" evidence="3">
    <location>
        <position position="51"/>
    </location>
</feature>
<feature type="site" description="Important residue for inhibition of muscle alpha-1-beta-1-delta-epsilon (CHRNA1-CHRNB1-CHRND-CHRNE) and neuronal alpha-3-beta-2/CHRNA3-CHRNB2 nAChR" evidence="3">
    <location>
        <position position="66"/>
    </location>
</feature>
<feature type="site" description="Important residue for interaction with muscle alpha-1-beta-1-delta-epsilon (CHRNA1-CHRNB1-CHRND-CHRNE) and neuronal alpha-3-beta-2/CHRNA3-CHRNB2 nAChR" evidence="3">
    <location>
        <position position="67"/>
    </location>
</feature>
<feature type="disulfide bond" evidence="2">
    <location>
        <begin position="24"/>
        <end position="40"/>
    </location>
</feature>
<feature type="disulfide bond" evidence="2">
    <location>
        <begin position="33"/>
        <end position="58"/>
    </location>
</feature>
<feature type="disulfide bond" evidence="2">
    <location>
        <begin position="62"/>
        <end position="70"/>
    </location>
</feature>
<feature type="disulfide bond" evidence="2">
    <location>
        <begin position="71"/>
        <end position="76"/>
    </location>
</feature>
<reference key="1">
    <citation type="journal article" date="2006" name="Biochem. J.">
        <title>Novel genes encoding six kinds of three-finger toxins in Ophiophagus hannah (king cobra) and function characterization of two recombinant long-chain neurotoxins.</title>
        <authorList>
            <person name="Li J."/>
            <person name="Zhang H."/>
            <person name="Liu J."/>
            <person name="Xu K."/>
        </authorList>
    </citation>
    <scope>NUCLEOTIDE SEQUENCE [MRNA]</scope>
    <source>
        <tissue>Venom gland</tissue>
    </source>
</reference>
<organism>
    <name type="scientific">Ophiophagus hannah</name>
    <name type="common">King cobra</name>
    <name type="synonym">Naja hannah</name>
    <dbReference type="NCBI Taxonomy" id="8665"/>
    <lineage>
        <taxon>Eukaryota</taxon>
        <taxon>Metazoa</taxon>
        <taxon>Chordata</taxon>
        <taxon>Craniata</taxon>
        <taxon>Vertebrata</taxon>
        <taxon>Euteleostomi</taxon>
        <taxon>Lepidosauria</taxon>
        <taxon>Squamata</taxon>
        <taxon>Bifurcata</taxon>
        <taxon>Unidentata</taxon>
        <taxon>Episquamata</taxon>
        <taxon>Toxicofera</taxon>
        <taxon>Serpentes</taxon>
        <taxon>Colubroidea</taxon>
        <taxon>Elapidae</taxon>
        <taxon>Elapinae</taxon>
        <taxon>Ophiophagus</taxon>
    </lineage>
</organism>
<dbReference type="EMBL" id="DQ273573">
    <property type="protein sequence ID" value="ABB83627.1"/>
    <property type="molecule type" value="mRNA"/>
</dbReference>
<dbReference type="SMR" id="Q2VBP2"/>
<dbReference type="GO" id="GO:0005576">
    <property type="term" value="C:extracellular region"/>
    <property type="evidence" value="ECO:0007669"/>
    <property type="project" value="UniProtKB-SubCell"/>
</dbReference>
<dbReference type="GO" id="GO:0030550">
    <property type="term" value="F:acetylcholine receptor inhibitor activity"/>
    <property type="evidence" value="ECO:0007669"/>
    <property type="project" value="UniProtKB-KW"/>
</dbReference>
<dbReference type="GO" id="GO:0099106">
    <property type="term" value="F:ion channel regulator activity"/>
    <property type="evidence" value="ECO:0007669"/>
    <property type="project" value="UniProtKB-KW"/>
</dbReference>
<dbReference type="GO" id="GO:0090729">
    <property type="term" value="F:toxin activity"/>
    <property type="evidence" value="ECO:0007669"/>
    <property type="project" value="UniProtKB-KW"/>
</dbReference>
<dbReference type="CDD" id="cd00206">
    <property type="entry name" value="TFP_snake_toxin"/>
    <property type="match status" value="1"/>
</dbReference>
<dbReference type="Gene3D" id="2.10.60.10">
    <property type="entry name" value="CD59"/>
    <property type="match status" value="1"/>
</dbReference>
<dbReference type="InterPro" id="IPR003571">
    <property type="entry name" value="Snake_3FTx"/>
</dbReference>
<dbReference type="InterPro" id="IPR045860">
    <property type="entry name" value="Snake_toxin-like_sf"/>
</dbReference>
<dbReference type="InterPro" id="IPR054131">
    <property type="entry name" value="Toxin_cobra-type"/>
</dbReference>
<dbReference type="Pfam" id="PF21947">
    <property type="entry name" value="Toxin_cobra-type"/>
    <property type="match status" value="1"/>
</dbReference>
<dbReference type="SUPFAM" id="SSF57302">
    <property type="entry name" value="Snake toxin-like"/>
    <property type="match status" value="1"/>
</dbReference>
<keyword id="KW-0008">Acetylcholine receptor inhibiting toxin</keyword>
<keyword id="KW-1015">Disulfide bond</keyword>
<keyword id="KW-0872">Ion channel impairing toxin</keyword>
<keyword id="KW-0528">Neurotoxin</keyword>
<keyword id="KW-0629">Postsynaptic neurotoxin</keyword>
<keyword id="KW-0964">Secreted</keyword>
<keyword id="KW-0732">Signal</keyword>
<keyword id="KW-0800">Toxin</keyword>
<proteinExistence type="inferred from homology"/>